<evidence type="ECO:0000255" key="1">
    <source>
        <dbReference type="HAMAP-Rule" id="MF_01606"/>
    </source>
</evidence>
<feature type="chain" id="PRO_1000148175" description="Iron-sulfur cluster repair protein YtfE">
    <location>
        <begin position="1"/>
        <end position="220"/>
    </location>
</feature>
<reference key="1">
    <citation type="journal article" date="2009" name="PLoS Genet.">
        <title>Organised genome dynamics in the Escherichia coli species results in highly diverse adaptive paths.</title>
        <authorList>
            <person name="Touchon M."/>
            <person name="Hoede C."/>
            <person name="Tenaillon O."/>
            <person name="Barbe V."/>
            <person name="Baeriswyl S."/>
            <person name="Bidet P."/>
            <person name="Bingen E."/>
            <person name="Bonacorsi S."/>
            <person name="Bouchier C."/>
            <person name="Bouvet O."/>
            <person name="Calteau A."/>
            <person name="Chiapello H."/>
            <person name="Clermont O."/>
            <person name="Cruveiller S."/>
            <person name="Danchin A."/>
            <person name="Diard M."/>
            <person name="Dossat C."/>
            <person name="Karoui M.E."/>
            <person name="Frapy E."/>
            <person name="Garry L."/>
            <person name="Ghigo J.M."/>
            <person name="Gilles A.M."/>
            <person name="Johnson J."/>
            <person name="Le Bouguenec C."/>
            <person name="Lescat M."/>
            <person name="Mangenot S."/>
            <person name="Martinez-Jehanne V."/>
            <person name="Matic I."/>
            <person name="Nassif X."/>
            <person name="Oztas S."/>
            <person name="Petit M.A."/>
            <person name="Pichon C."/>
            <person name="Rouy Z."/>
            <person name="Ruf C.S."/>
            <person name="Schneider D."/>
            <person name="Tourret J."/>
            <person name="Vacherie B."/>
            <person name="Vallenet D."/>
            <person name="Medigue C."/>
            <person name="Rocha E.P.C."/>
            <person name="Denamur E."/>
        </authorList>
    </citation>
    <scope>NUCLEOTIDE SEQUENCE [LARGE SCALE GENOMIC DNA]</scope>
    <source>
        <strain>IAI1</strain>
    </source>
</reference>
<name>YTFE_ECO8A</name>
<keyword id="KW-0963">Cytoplasm</keyword>
<keyword id="KW-0408">Iron</keyword>
<keyword id="KW-0479">Metal-binding</keyword>
<keyword id="KW-0346">Stress response</keyword>
<comment type="function">
    <text evidence="1">Di-iron-containing protein involved in the repair of iron-sulfur clusters damaged by oxidative and nitrosative stress conditions.</text>
</comment>
<comment type="subunit">
    <text evidence="1">Homodimer.</text>
</comment>
<comment type="subcellular location">
    <subcellularLocation>
        <location evidence="1">Cytoplasm</location>
    </subcellularLocation>
</comment>
<comment type="similarity">
    <text evidence="1">Belongs to the RIC family. YtfE subfamily.</text>
</comment>
<sequence>MAYRDQPLGELALSIPRASALFRKYDMDYCCGGKQTLSRAAARKELDVEVIEAELAKLAEQPIEKDWRSAPLAEIIDHIIVRYHDRHREQLPELILQATKVERVHADKPSVPKGLTKYLTMLHEELSSHMMKEEQILFPMIKQGMGSQAMGPISVMESEHDEAGELLEVIKHTTNNVTPPPEACTTWKAMYNGINELIDDLMDHISLENNVLFPRALAGE</sequence>
<dbReference type="EMBL" id="CU928160">
    <property type="protein sequence ID" value="CAR01185.1"/>
    <property type="molecule type" value="Genomic_DNA"/>
</dbReference>
<dbReference type="RefSeq" id="WP_000331465.1">
    <property type="nucleotide sequence ID" value="NC_011741.1"/>
</dbReference>
<dbReference type="SMR" id="B7M9H2"/>
<dbReference type="KEGG" id="ecr:ECIAI1_4443"/>
<dbReference type="HOGENOM" id="CLU_076075_2_0_6"/>
<dbReference type="GO" id="GO:0005737">
    <property type="term" value="C:cytoplasm"/>
    <property type="evidence" value="ECO:0007669"/>
    <property type="project" value="UniProtKB-SubCell"/>
</dbReference>
<dbReference type="GO" id="GO:0046872">
    <property type="term" value="F:metal ion binding"/>
    <property type="evidence" value="ECO:0007669"/>
    <property type="project" value="UniProtKB-KW"/>
</dbReference>
<dbReference type="GO" id="GO:0030091">
    <property type="term" value="P:protein repair"/>
    <property type="evidence" value="ECO:0007669"/>
    <property type="project" value="UniProtKB-UniRule"/>
</dbReference>
<dbReference type="GO" id="GO:0051409">
    <property type="term" value="P:response to nitrosative stress"/>
    <property type="evidence" value="ECO:0007669"/>
    <property type="project" value="UniProtKB-UniRule"/>
</dbReference>
<dbReference type="GO" id="GO:0006979">
    <property type="term" value="P:response to oxidative stress"/>
    <property type="evidence" value="ECO:0007669"/>
    <property type="project" value="UniProtKB-UniRule"/>
</dbReference>
<dbReference type="CDD" id="cd12108">
    <property type="entry name" value="Hr-like"/>
    <property type="match status" value="1"/>
</dbReference>
<dbReference type="FunFam" id="1.20.120.520:FF:000001">
    <property type="entry name" value="Iron-sulfur cluster repair protein YtfE"/>
    <property type="match status" value="1"/>
</dbReference>
<dbReference type="Gene3D" id="1.20.120.520">
    <property type="entry name" value="nmb1532 protein domain like"/>
    <property type="match status" value="1"/>
</dbReference>
<dbReference type="HAMAP" id="MF_01606">
    <property type="entry name" value="RIC_YtfE"/>
    <property type="match status" value="1"/>
</dbReference>
<dbReference type="InterPro" id="IPR023742">
    <property type="entry name" value="FeS-repair_YftE"/>
</dbReference>
<dbReference type="InterPro" id="IPR012312">
    <property type="entry name" value="Hemerythrin-like"/>
</dbReference>
<dbReference type="InterPro" id="IPR019903">
    <property type="entry name" value="RIC_family"/>
</dbReference>
<dbReference type="NCBIfam" id="TIGR03652">
    <property type="entry name" value="FeS_repair_RIC"/>
    <property type="match status" value="1"/>
</dbReference>
<dbReference type="NCBIfam" id="NF008221">
    <property type="entry name" value="PRK10992.1"/>
    <property type="match status" value="1"/>
</dbReference>
<dbReference type="PANTHER" id="PTHR36438">
    <property type="entry name" value="IRON-SULFUR CLUSTER REPAIR PROTEIN YTFE"/>
    <property type="match status" value="1"/>
</dbReference>
<dbReference type="PANTHER" id="PTHR36438:SF1">
    <property type="entry name" value="IRON-SULFUR CLUSTER REPAIR PROTEIN YTFE"/>
    <property type="match status" value="1"/>
</dbReference>
<dbReference type="Pfam" id="PF01814">
    <property type="entry name" value="Hemerythrin"/>
    <property type="match status" value="1"/>
</dbReference>
<dbReference type="Pfam" id="PF04405">
    <property type="entry name" value="ScdA_N"/>
    <property type="match status" value="1"/>
</dbReference>
<organism>
    <name type="scientific">Escherichia coli O8 (strain IAI1)</name>
    <dbReference type="NCBI Taxonomy" id="585034"/>
    <lineage>
        <taxon>Bacteria</taxon>
        <taxon>Pseudomonadati</taxon>
        <taxon>Pseudomonadota</taxon>
        <taxon>Gammaproteobacteria</taxon>
        <taxon>Enterobacterales</taxon>
        <taxon>Enterobacteriaceae</taxon>
        <taxon>Escherichia</taxon>
    </lineage>
</organism>
<accession>B7M9H2</accession>
<proteinExistence type="inferred from homology"/>
<gene>
    <name evidence="1" type="primary">ytfE</name>
    <name type="ordered locus">ECIAI1_4443</name>
</gene>
<protein>
    <recommendedName>
        <fullName evidence="1">Iron-sulfur cluster repair protein YtfE</fullName>
    </recommendedName>
</protein>